<reference key="1">
    <citation type="journal article" date="2007" name="J. Bacteriol.">
        <title>The complete genome sequence of Campylobacter jejuni strain 81116 (NCTC11828).</title>
        <authorList>
            <person name="Pearson B.M."/>
            <person name="Gaskin D.J.H."/>
            <person name="Segers R.P.A.M."/>
            <person name="Wells J.M."/>
            <person name="Nuijten P.J.M."/>
            <person name="van Vliet A.H.M."/>
        </authorList>
    </citation>
    <scope>NUCLEOTIDE SEQUENCE [LARGE SCALE GENOMIC DNA]</scope>
    <source>
        <strain>81116 / NCTC 11828</strain>
    </source>
</reference>
<sequence length="200" mass="22899">MQKFIIHKGIACPLEYANIDTDQIIPKQFLLAVSKQGFGKHLFHDLRYLDDKESVLNMDFNLNKKEYQNSSILVSFENFGSGSSREHAPWALVDYGIRAIIAPSFADIFKNNALGNGLLTIELAKDEVLEIVDELKKSQDKNIEISLLEKRVFFKDKIFSFDLDDFHRICLLEGLDNIALTLKHEAQIKAYEKNSKSFLV</sequence>
<dbReference type="EC" id="4.2.1.33" evidence="1"/>
<dbReference type="EMBL" id="CP000814">
    <property type="protein sequence ID" value="ABV53219.1"/>
    <property type="molecule type" value="Genomic_DNA"/>
</dbReference>
<dbReference type="RefSeq" id="WP_002853150.1">
    <property type="nucleotide sequence ID" value="NC_009839.1"/>
</dbReference>
<dbReference type="SMR" id="A8FP32"/>
<dbReference type="KEGG" id="cju:C8J_1622"/>
<dbReference type="HOGENOM" id="CLU_081378_0_3_7"/>
<dbReference type="UniPathway" id="UPA00048">
    <property type="reaction ID" value="UER00071"/>
</dbReference>
<dbReference type="GO" id="GO:0009316">
    <property type="term" value="C:3-isopropylmalate dehydratase complex"/>
    <property type="evidence" value="ECO:0007669"/>
    <property type="project" value="InterPro"/>
</dbReference>
<dbReference type="GO" id="GO:0003861">
    <property type="term" value="F:3-isopropylmalate dehydratase activity"/>
    <property type="evidence" value="ECO:0007669"/>
    <property type="project" value="UniProtKB-UniRule"/>
</dbReference>
<dbReference type="GO" id="GO:0009098">
    <property type="term" value="P:L-leucine biosynthetic process"/>
    <property type="evidence" value="ECO:0007669"/>
    <property type="project" value="UniProtKB-UniRule"/>
</dbReference>
<dbReference type="CDD" id="cd01577">
    <property type="entry name" value="IPMI_Swivel"/>
    <property type="match status" value="1"/>
</dbReference>
<dbReference type="FunFam" id="3.20.19.10:FF:000003">
    <property type="entry name" value="3-isopropylmalate dehydratase small subunit"/>
    <property type="match status" value="1"/>
</dbReference>
<dbReference type="Gene3D" id="3.20.19.10">
    <property type="entry name" value="Aconitase, domain 4"/>
    <property type="match status" value="1"/>
</dbReference>
<dbReference type="HAMAP" id="MF_01031">
    <property type="entry name" value="LeuD_type1"/>
    <property type="match status" value="1"/>
</dbReference>
<dbReference type="InterPro" id="IPR004431">
    <property type="entry name" value="3-IsopropMal_deHydase_ssu"/>
</dbReference>
<dbReference type="InterPro" id="IPR015928">
    <property type="entry name" value="Aconitase/3IPM_dehydase_swvl"/>
</dbReference>
<dbReference type="InterPro" id="IPR000573">
    <property type="entry name" value="AconitaseA/IPMdHydase_ssu_swvl"/>
</dbReference>
<dbReference type="InterPro" id="IPR033940">
    <property type="entry name" value="IPMI_Swivel"/>
</dbReference>
<dbReference type="InterPro" id="IPR050075">
    <property type="entry name" value="LeuD"/>
</dbReference>
<dbReference type="NCBIfam" id="TIGR00171">
    <property type="entry name" value="leuD"/>
    <property type="match status" value="1"/>
</dbReference>
<dbReference type="NCBIfam" id="NF002458">
    <property type="entry name" value="PRK01641.1"/>
    <property type="match status" value="1"/>
</dbReference>
<dbReference type="PANTHER" id="PTHR43345:SF5">
    <property type="entry name" value="3-ISOPROPYLMALATE DEHYDRATASE SMALL SUBUNIT"/>
    <property type="match status" value="1"/>
</dbReference>
<dbReference type="PANTHER" id="PTHR43345">
    <property type="entry name" value="3-ISOPROPYLMALATE DEHYDRATASE SMALL SUBUNIT 2-RELATED-RELATED"/>
    <property type="match status" value="1"/>
</dbReference>
<dbReference type="Pfam" id="PF00694">
    <property type="entry name" value="Aconitase_C"/>
    <property type="match status" value="1"/>
</dbReference>
<dbReference type="SUPFAM" id="SSF52016">
    <property type="entry name" value="LeuD/IlvD-like"/>
    <property type="match status" value="1"/>
</dbReference>
<accession>A8FP32</accession>
<proteinExistence type="inferred from homology"/>
<gene>
    <name evidence="1" type="primary">leuD</name>
    <name type="ordered locus">C8J_1622</name>
</gene>
<organism>
    <name type="scientific">Campylobacter jejuni subsp. jejuni serotype O:6 (strain 81116 / NCTC 11828)</name>
    <dbReference type="NCBI Taxonomy" id="407148"/>
    <lineage>
        <taxon>Bacteria</taxon>
        <taxon>Pseudomonadati</taxon>
        <taxon>Campylobacterota</taxon>
        <taxon>Epsilonproteobacteria</taxon>
        <taxon>Campylobacterales</taxon>
        <taxon>Campylobacteraceae</taxon>
        <taxon>Campylobacter</taxon>
    </lineage>
</organism>
<protein>
    <recommendedName>
        <fullName evidence="1">3-isopropylmalate dehydratase small subunit</fullName>
        <ecNumber evidence="1">4.2.1.33</ecNumber>
    </recommendedName>
    <alternativeName>
        <fullName evidence="1">Alpha-IPM isomerase</fullName>
        <shortName evidence="1">IPMI</shortName>
    </alternativeName>
    <alternativeName>
        <fullName evidence="1">Isopropylmalate isomerase</fullName>
    </alternativeName>
</protein>
<comment type="function">
    <text evidence="1">Catalyzes the isomerization between 2-isopropylmalate and 3-isopropylmalate, via the formation of 2-isopropylmaleate.</text>
</comment>
<comment type="catalytic activity">
    <reaction evidence="1">
        <text>(2R,3S)-3-isopropylmalate = (2S)-2-isopropylmalate</text>
        <dbReference type="Rhea" id="RHEA:32287"/>
        <dbReference type="ChEBI" id="CHEBI:1178"/>
        <dbReference type="ChEBI" id="CHEBI:35121"/>
        <dbReference type="EC" id="4.2.1.33"/>
    </reaction>
</comment>
<comment type="pathway">
    <text evidence="1">Amino-acid biosynthesis; L-leucine biosynthesis; L-leucine from 3-methyl-2-oxobutanoate: step 2/4.</text>
</comment>
<comment type="subunit">
    <text evidence="1">Heterodimer of LeuC and LeuD.</text>
</comment>
<comment type="similarity">
    <text evidence="1">Belongs to the LeuD family. LeuD type 1 subfamily.</text>
</comment>
<keyword id="KW-0028">Amino-acid biosynthesis</keyword>
<keyword id="KW-0100">Branched-chain amino acid biosynthesis</keyword>
<keyword id="KW-0432">Leucine biosynthesis</keyword>
<keyword id="KW-0456">Lyase</keyword>
<name>LEUD_CAMJ8</name>
<evidence type="ECO:0000255" key="1">
    <source>
        <dbReference type="HAMAP-Rule" id="MF_01031"/>
    </source>
</evidence>
<feature type="chain" id="PRO_1000072957" description="3-isopropylmalate dehydratase small subunit">
    <location>
        <begin position="1"/>
        <end position="200"/>
    </location>
</feature>